<sequence length="144" mass="15634">MRSRSFLVLVAVFLICETLVAQRLDRIRGPKGQGQDPVEGQDQDEGQGPVKVEILDIGQDLVKGQDPVEGQDPVKAQLPDKVQDPVKAQPPIQGGFLFPKPGVCPKIIFCPLVNPPIKCWRDSHCPGVKKCCPSLCGKGCVTPR</sequence>
<protein>
    <recommendedName>
        <fullName>Protein WAP-3</fullName>
    </recommendedName>
</protein>
<accession>Q29126</accession>
<name>WAP3_PIG</name>
<proteinExistence type="evidence at transcript level"/>
<evidence type="ECO:0000250" key="1"/>
<evidence type="ECO:0000255" key="2"/>
<evidence type="ECO:0000255" key="3">
    <source>
        <dbReference type="PROSITE-ProRule" id="PRU00722"/>
    </source>
</evidence>
<evidence type="ECO:0000256" key="4">
    <source>
        <dbReference type="SAM" id="MobiDB-lite"/>
    </source>
</evidence>
<comment type="tissue specificity">
    <text>Large intestine (relatively low levels).</text>
</comment>
<organism>
    <name type="scientific">Sus scrofa</name>
    <name type="common">Pig</name>
    <dbReference type="NCBI Taxonomy" id="9823"/>
    <lineage>
        <taxon>Eukaryota</taxon>
        <taxon>Metazoa</taxon>
        <taxon>Chordata</taxon>
        <taxon>Craniata</taxon>
        <taxon>Vertebrata</taxon>
        <taxon>Euteleostomi</taxon>
        <taxon>Mammalia</taxon>
        <taxon>Eutheria</taxon>
        <taxon>Laurasiatheria</taxon>
        <taxon>Artiodactyla</taxon>
        <taxon>Suina</taxon>
        <taxon>Suidae</taxon>
        <taxon>Sus</taxon>
    </lineage>
</organism>
<feature type="signal peptide" evidence="2">
    <location>
        <begin position="1"/>
        <end position="21"/>
    </location>
</feature>
<feature type="propeptide" id="PRO_0000041363" evidence="1">
    <location>
        <begin position="22"/>
        <end status="unknown"/>
    </location>
</feature>
<feature type="chain" id="PRO_0000041364" description="Protein WAP-3">
    <location>
        <begin status="unknown"/>
        <end position="144"/>
    </location>
</feature>
<feature type="repeat" description="1">
    <location>
        <begin position="34"/>
        <end position="39"/>
    </location>
</feature>
<feature type="repeat" description="2">
    <location>
        <begin position="40"/>
        <end position="45"/>
    </location>
</feature>
<feature type="repeat" description="3">
    <location>
        <begin position="46"/>
        <end position="51"/>
    </location>
</feature>
<feature type="repeat" description="4">
    <location>
        <begin position="58"/>
        <end position="63"/>
    </location>
</feature>
<feature type="repeat" description="5">
    <location>
        <begin position="64"/>
        <end position="69"/>
    </location>
</feature>
<feature type="repeat" description="6">
    <location>
        <begin position="70"/>
        <end position="75"/>
    </location>
</feature>
<feature type="repeat" description="7">
    <location>
        <begin position="76"/>
        <end position="81"/>
    </location>
</feature>
<feature type="repeat" description="8">
    <location>
        <begin position="82"/>
        <end position="87"/>
    </location>
</feature>
<feature type="domain" description="WAP" evidence="3">
    <location>
        <begin position="97"/>
        <end position="144"/>
    </location>
</feature>
<feature type="region of interest" description="Disordered" evidence="4">
    <location>
        <begin position="28"/>
        <end position="49"/>
    </location>
</feature>
<feature type="region of interest" description="8 X 6 AA approximate tandem repeats">
    <location>
        <position position="34"/>
    </location>
</feature>
<feature type="region of interest" description="Disordered" evidence="4">
    <location>
        <begin position="64"/>
        <end position="85"/>
    </location>
</feature>
<feature type="disulfide bond" evidence="3">
    <location>
        <begin position="104"/>
        <end position="132"/>
    </location>
</feature>
<feature type="disulfide bond" evidence="3">
    <location>
        <begin position="110"/>
        <end position="136"/>
    </location>
</feature>
<feature type="disulfide bond" evidence="3">
    <location>
        <begin position="119"/>
        <end position="131"/>
    </location>
</feature>
<feature type="disulfide bond" evidence="3">
    <location>
        <begin position="125"/>
        <end position="140"/>
    </location>
</feature>
<dbReference type="EMBL" id="D50321">
    <property type="protein sequence ID" value="BAA08856.1"/>
    <property type="molecule type" value="Genomic_DNA"/>
</dbReference>
<dbReference type="RefSeq" id="NP_001193482.1">
    <property type="nucleotide sequence ID" value="NM_001206553.1"/>
</dbReference>
<dbReference type="SMR" id="Q29126"/>
<dbReference type="MEROPS" id="I17.002"/>
<dbReference type="PeptideAtlas" id="Q29126"/>
<dbReference type="Ensembl" id="ENSSSCT00065103396.1">
    <property type="protein sequence ID" value="ENSSSCP00065045709.1"/>
    <property type="gene ID" value="ENSSSCG00065074995.1"/>
</dbReference>
<dbReference type="Ensembl" id="ENSSSCT00090008092">
    <property type="protein sequence ID" value="ENSSSCP00090004861"/>
    <property type="gene ID" value="ENSSSCG00090004631"/>
</dbReference>
<dbReference type="Ensembl" id="ENSSSCT00105030698">
    <property type="protein sequence ID" value="ENSSSCP00105021354"/>
    <property type="gene ID" value="ENSSSCG00105016013"/>
</dbReference>
<dbReference type="GeneID" id="100607966"/>
<dbReference type="CTD" id="100607966"/>
<dbReference type="InParanoid" id="Q29126"/>
<dbReference type="Proteomes" id="UP000008227">
    <property type="component" value="Unplaced"/>
</dbReference>
<dbReference type="Proteomes" id="UP000314985">
    <property type="component" value="Unplaced"/>
</dbReference>
<dbReference type="Proteomes" id="UP000694570">
    <property type="component" value="Unplaced"/>
</dbReference>
<dbReference type="Proteomes" id="UP000694571">
    <property type="component" value="Unplaced"/>
</dbReference>
<dbReference type="Proteomes" id="UP000694720">
    <property type="component" value="Unplaced"/>
</dbReference>
<dbReference type="Proteomes" id="UP000694722">
    <property type="component" value="Unplaced"/>
</dbReference>
<dbReference type="Proteomes" id="UP000694723">
    <property type="component" value="Unplaced"/>
</dbReference>
<dbReference type="Proteomes" id="UP000694724">
    <property type="component" value="Unplaced"/>
</dbReference>
<dbReference type="Proteomes" id="UP000694725">
    <property type="component" value="Unplaced"/>
</dbReference>
<dbReference type="Proteomes" id="UP000694726">
    <property type="component" value="Unplaced"/>
</dbReference>
<dbReference type="Proteomes" id="UP000694727">
    <property type="component" value="Unplaced"/>
</dbReference>
<dbReference type="Proteomes" id="UP000694728">
    <property type="component" value="Unplaced"/>
</dbReference>
<dbReference type="GO" id="GO:0005615">
    <property type="term" value="C:extracellular space"/>
    <property type="evidence" value="ECO:0000318"/>
    <property type="project" value="GO_Central"/>
</dbReference>
<dbReference type="GO" id="GO:0004867">
    <property type="term" value="F:serine-type endopeptidase inhibitor activity"/>
    <property type="evidence" value="ECO:0000318"/>
    <property type="project" value="GO_Central"/>
</dbReference>
<dbReference type="GO" id="GO:0019731">
    <property type="term" value="P:antibacterial humoral response"/>
    <property type="evidence" value="ECO:0000318"/>
    <property type="project" value="GO_Central"/>
</dbReference>
<dbReference type="GO" id="GO:0045087">
    <property type="term" value="P:innate immune response"/>
    <property type="evidence" value="ECO:0000318"/>
    <property type="project" value="GO_Central"/>
</dbReference>
<dbReference type="CDD" id="cd00199">
    <property type="entry name" value="WAP"/>
    <property type="match status" value="1"/>
</dbReference>
<dbReference type="Gene3D" id="4.10.75.10">
    <property type="entry name" value="Elafin-like"/>
    <property type="match status" value="1"/>
</dbReference>
<dbReference type="InterPro" id="IPR036645">
    <property type="entry name" value="Elafin-like_sf"/>
</dbReference>
<dbReference type="InterPro" id="IPR019541">
    <property type="entry name" value="Trappin_transglut-bd_rpt"/>
</dbReference>
<dbReference type="InterPro" id="IPR008197">
    <property type="entry name" value="WAP_dom"/>
</dbReference>
<dbReference type="Pfam" id="PF10511">
    <property type="entry name" value="Cementoin"/>
    <property type="match status" value="1"/>
</dbReference>
<dbReference type="Pfam" id="PF00095">
    <property type="entry name" value="WAP"/>
    <property type="match status" value="1"/>
</dbReference>
<dbReference type="PRINTS" id="PR00003">
    <property type="entry name" value="4DISULPHCORE"/>
</dbReference>
<dbReference type="SMART" id="SM00217">
    <property type="entry name" value="WAP"/>
    <property type="match status" value="1"/>
</dbReference>
<dbReference type="SUPFAM" id="SSF57256">
    <property type="entry name" value="Elafin-like"/>
    <property type="match status" value="1"/>
</dbReference>
<dbReference type="PROSITE" id="PS51390">
    <property type="entry name" value="WAP"/>
    <property type="match status" value="1"/>
</dbReference>
<keyword id="KW-1015">Disulfide bond</keyword>
<keyword id="KW-1185">Reference proteome</keyword>
<keyword id="KW-0677">Repeat</keyword>
<keyword id="KW-0732">Signal</keyword>
<reference key="1">
    <citation type="journal article" date="1996" name="J. Biol. Chem.">
        <title>Accelerated evolution in inhibitor domains of porcine elafin family members.</title>
        <authorList>
            <person name="Tamechika I."/>
            <person name="Itakura M."/>
            <person name="Saruta Y."/>
            <person name="Furukawa M."/>
            <person name="Kato A."/>
            <person name="Tachibana S."/>
            <person name="Hirose S."/>
        </authorList>
    </citation>
    <scope>NUCLEOTIDE SEQUENCE [GENOMIC DNA]</scope>
</reference>